<keyword id="KW-0131">Cell cycle</keyword>
<keyword id="KW-0132">Cell division</keyword>
<keyword id="KW-0133">Cell shape</keyword>
<keyword id="KW-0961">Cell wall biogenesis/degradation</keyword>
<keyword id="KW-0963">Cytoplasm</keyword>
<keyword id="KW-0573">Peptidoglycan synthesis</keyword>
<keyword id="KW-0670">Pyruvate</keyword>
<keyword id="KW-1185">Reference proteome</keyword>
<keyword id="KW-0808">Transferase</keyword>
<protein>
    <recommendedName>
        <fullName evidence="1">UDP-N-acetylglucosamine 1-carboxyvinyltransferase</fullName>
        <ecNumber evidence="1">2.5.1.7</ecNumber>
    </recommendedName>
    <alternativeName>
        <fullName evidence="1">Enoylpyruvate transferase</fullName>
    </alternativeName>
    <alternativeName>
        <fullName evidence="1">UDP-N-acetylglucosamine enolpyruvyl transferase</fullName>
        <shortName evidence="1">EPT</shortName>
    </alternativeName>
</protein>
<proteinExistence type="inferred from homology"/>
<gene>
    <name evidence="1" type="primary">murA</name>
    <name type="ordered locus">Xaut_3131</name>
</gene>
<sequence>MDKIRIVGGNELKGTIPISGAKNAALPLMIASLLTEEKLILENVPRLADVALLQRILGNHGVDITTNGKRNGDDPYAGQTLEIDARVIVDTTAPYDLVSRMRASFWVLGPLLARIGVAKVSLPGGCAIGTRPVDFHLDALRALGAEIEIDAGYVVAKAPQGLKGARIVFPKVSVGATHTALMAATLARGDSIIENAAREPEVVDLADCLIKMGARITGAGSSTIHVEGVARLKAARHAVLPDRIETGTYAMATAMTGGDVMLAGARPDLLESALDALRQAGAEIDATNEGIRVRRNGAGILPVDVTTAPYPGFPTDLQAQFMALMTKAKGNCRITETIFENRFMHVQELARLGARIHLDGDTAVVEGVERLTGAPVMATDLRASVSLVIAGLAAEGETMVQRVYHLDRGFEKLEEKLSRCGAQIERISG</sequence>
<comment type="function">
    <text evidence="1">Cell wall formation. Adds enolpyruvyl to UDP-N-acetylglucosamine.</text>
</comment>
<comment type="catalytic activity">
    <reaction evidence="1">
        <text>phosphoenolpyruvate + UDP-N-acetyl-alpha-D-glucosamine = UDP-N-acetyl-3-O-(1-carboxyvinyl)-alpha-D-glucosamine + phosphate</text>
        <dbReference type="Rhea" id="RHEA:18681"/>
        <dbReference type="ChEBI" id="CHEBI:43474"/>
        <dbReference type="ChEBI" id="CHEBI:57705"/>
        <dbReference type="ChEBI" id="CHEBI:58702"/>
        <dbReference type="ChEBI" id="CHEBI:68483"/>
        <dbReference type="EC" id="2.5.1.7"/>
    </reaction>
</comment>
<comment type="pathway">
    <text evidence="1">Cell wall biogenesis; peptidoglycan biosynthesis.</text>
</comment>
<comment type="subcellular location">
    <subcellularLocation>
        <location evidence="1">Cytoplasm</location>
    </subcellularLocation>
</comment>
<comment type="similarity">
    <text evidence="1">Belongs to the EPSP synthase family. MurA subfamily.</text>
</comment>
<reference key="1">
    <citation type="submission" date="2007-07" db="EMBL/GenBank/DDBJ databases">
        <title>Complete sequence of chromosome of Xanthobacter autotrophicus Py2.</title>
        <authorList>
            <consortium name="US DOE Joint Genome Institute"/>
            <person name="Copeland A."/>
            <person name="Lucas S."/>
            <person name="Lapidus A."/>
            <person name="Barry K."/>
            <person name="Glavina del Rio T."/>
            <person name="Hammon N."/>
            <person name="Israni S."/>
            <person name="Dalin E."/>
            <person name="Tice H."/>
            <person name="Pitluck S."/>
            <person name="Sims D."/>
            <person name="Brettin T."/>
            <person name="Bruce D."/>
            <person name="Detter J.C."/>
            <person name="Han C."/>
            <person name="Tapia R."/>
            <person name="Brainard J."/>
            <person name="Schmutz J."/>
            <person name="Larimer F."/>
            <person name="Land M."/>
            <person name="Hauser L."/>
            <person name="Kyrpides N."/>
            <person name="Kim E."/>
            <person name="Ensigns S.A."/>
            <person name="Richardson P."/>
        </authorList>
    </citation>
    <scope>NUCLEOTIDE SEQUENCE [LARGE SCALE GENOMIC DNA]</scope>
    <source>
        <strain>ATCC BAA-1158 / Py2</strain>
    </source>
</reference>
<feature type="chain" id="PRO_1000094735" description="UDP-N-acetylglucosamine 1-carboxyvinyltransferase">
    <location>
        <begin position="1"/>
        <end position="429"/>
    </location>
</feature>
<feature type="active site" description="Proton donor" evidence="1">
    <location>
        <position position="126"/>
    </location>
</feature>
<feature type="binding site" evidence="1">
    <location>
        <begin position="22"/>
        <end position="23"/>
    </location>
    <ligand>
        <name>phosphoenolpyruvate</name>
        <dbReference type="ChEBI" id="CHEBI:58702"/>
    </ligand>
</feature>
<feature type="binding site" evidence="1">
    <location>
        <position position="102"/>
    </location>
    <ligand>
        <name>UDP-N-acetyl-alpha-D-glucosamine</name>
        <dbReference type="ChEBI" id="CHEBI:57705"/>
    </ligand>
</feature>
<feature type="binding site" evidence="1">
    <location>
        <begin position="171"/>
        <end position="174"/>
    </location>
    <ligand>
        <name>UDP-N-acetyl-alpha-D-glucosamine</name>
        <dbReference type="ChEBI" id="CHEBI:57705"/>
    </ligand>
</feature>
<feature type="binding site" evidence="1">
    <location>
        <position position="316"/>
    </location>
    <ligand>
        <name>UDP-N-acetyl-alpha-D-glucosamine</name>
        <dbReference type="ChEBI" id="CHEBI:57705"/>
    </ligand>
</feature>
<feature type="binding site" evidence="1">
    <location>
        <position position="338"/>
    </location>
    <ligand>
        <name>UDP-N-acetyl-alpha-D-glucosamine</name>
        <dbReference type="ChEBI" id="CHEBI:57705"/>
    </ligand>
</feature>
<feature type="modified residue" description="2-(S-cysteinyl)pyruvic acid O-phosphothioketal" evidence="1">
    <location>
        <position position="126"/>
    </location>
</feature>
<accession>A7IK18</accession>
<evidence type="ECO:0000255" key="1">
    <source>
        <dbReference type="HAMAP-Rule" id="MF_00111"/>
    </source>
</evidence>
<organism>
    <name type="scientific">Xanthobacter autotrophicus (strain ATCC BAA-1158 / Py2)</name>
    <dbReference type="NCBI Taxonomy" id="78245"/>
    <lineage>
        <taxon>Bacteria</taxon>
        <taxon>Pseudomonadati</taxon>
        <taxon>Pseudomonadota</taxon>
        <taxon>Alphaproteobacteria</taxon>
        <taxon>Hyphomicrobiales</taxon>
        <taxon>Xanthobacteraceae</taxon>
        <taxon>Xanthobacter</taxon>
    </lineage>
</organism>
<dbReference type="EC" id="2.5.1.7" evidence="1"/>
<dbReference type="EMBL" id="CP000781">
    <property type="protein sequence ID" value="ABS68361.1"/>
    <property type="molecule type" value="Genomic_DNA"/>
</dbReference>
<dbReference type="SMR" id="A7IK18"/>
<dbReference type="STRING" id="78245.Xaut_3131"/>
<dbReference type="KEGG" id="xau:Xaut_3131"/>
<dbReference type="eggNOG" id="COG0766">
    <property type="taxonomic scope" value="Bacteria"/>
</dbReference>
<dbReference type="HOGENOM" id="CLU_027387_0_0_5"/>
<dbReference type="OrthoDB" id="9803760at2"/>
<dbReference type="PhylomeDB" id="A7IK18"/>
<dbReference type="UniPathway" id="UPA00219"/>
<dbReference type="Proteomes" id="UP000002417">
    <property type="component" value="Chromosome"/>
</dbReference>
<dbReference type="GO" id="GO:0005737">
    <property type="term" value="C:cytoplasm"/>
    <property type="evidence" value="ECO:0007669"/>
    <property type="project" value="UniProtKB-SubCell"/>
</dbReference>
<dbReference type="GO" id="GO:0008760">
    <property type="term" value="F:UDP-N-acetylglucosamine 1-carboxyvinyltransferase activity"/>
    <property type="evidence" value="ECO:0007669"/>
    <property type="project" value="UniProtKB-UniRule"/>
</dbReference>
<dbReference type="GO" id="GO:0051301">
    <property type="term" value="P:cell division"/>
    <property type="evidence" value="ECO:0007669"/>
    <property type="project" value="UniProtKB-KW"/>
</dbReference>
<dbReference type="GO" id="GO:0071555">
    <property type="term" value="P:cell wall organization"/>
    <property type="evidence" value="ECO:0007669"/>
    <property type="project" value="UniProtKB-KW"/>
</dbReference>
<dbReference type="GO" id="GO:0009252">
    <property type="term" value="P:peptidoglycan biosynthetic process"/>
    <property type="evidence" value="ECO:0007669"/>
    <property type="project" value="UniProtKB-UniRule"/>
</dbReference>
<dbReference type="GO" id="GO:0008360">
    <property type="term" value="P:regulation of cell shape"/>
    <property type="evidence" value="ECO:0007669"/>
    <property type="project" value="UniProtKB-KW"/>
</dbReference>
<dbReference type="GO" id="GO:0019277">
    <property type="term" value="P:UDP-N-acetylgalactosamine biosynthetic process"/>
    <property type="evidence" value="ECO:0007669"/>
    <property type="project" value="InterPro"/>
</dbReference>
<dbReference type="CDD" id="cd01555">
    <property type="entry name" value="UdpNAET"/>
    <property type="match status" value="1"/>
</dbReference>
<dbReference type="FunFam" id="3.65.10.10:FF:000001">
    <property type="entry name" value="UDP-N-acetylglucosamine 1-carboxyvinyltransferase"/>
    <property type="match status" value="1"/>
</dbReference>
<dbReference type="Gene3D" id="3.65.10.10">
    <property type="entry name" value="Enolpyruvate transferase domain"/>
    <property type="match status" value="2"/>
</dbReference>
<dbReference type="HAMAP" id="MF_00111">
    <property type="entry name" value="MurA"/>
    <property type="match status" value="1"/>
</dbReference>
<dbReference type="InterPro" id="IPR001986">
    <property type="entry name" value="Enolpyruvate_Tfrase_dom"/>
</dbReference>
<dbReference type="InterPro" id="IPR036968">
    <property type="entry name" value="Enolpyruvate_Tfrase_sf"/>
</dbReference>
<dbReference type="InterPro" id="IPR050068">
    <property type="entry name" value="MurA_subfamily"/>
</dbReference>
<dbReference type="InterPro" id="IPR013792">
    <property type="entry name" value="RNA3'P_cycl/enolpyr_Trfase_a/b"/>
</dbReference>
<dbReference type="InterPro" id="IPR005750">
    <property type="entry name" value="UDP_GlcNAc_COvinyl_MurA"/>
</dbReference>
<dbReference type="NCBIfam" id="TIGR01072">
    <property type="entry name" value="murA"/>
    <property type="match status" value="1"/>
</dbReference>
<dbReference type="NCBIfam" id="NF006873">
    <property type="entry name" value="PRK09369.1"/>
    <property type="match status" value="1"/>
</dbReference>
<dbReference type="PANTHER" id="PTHR43783">
    <property type="entry name" value="UDP-N-ACETYLGLUCOSAMINE 1-CARBOXYVINYLTRANSFERASE"/>
    <property type="match status" value="1"/>
</dbReference>
<dbReference type="PANTHER" id="PTHR43783:SF1">
    <property type="entry name" value="UDP-N-ACETYLGLUCOSAMINE 1-CARBOXYVINYLTRANSFERASE"/>
    <property type="match status" value="1"/>
</dbReference>
<dbReference type="Pfam" id="PF00275">
    <property type="entry name" value="EPSP_synthase"/>
    <property type="match status" value="1"/>
</dbReference>
<dbReference type="SUPFAM" id="SSF55205">
    <property type="entry name" value="EPT/RTPC-like"/>
    <property type="match status" value="1"/>
</dbReference>
<name>MURA_XANP2</name>